<feature type="chain" id="PRO_0000094130" description="Ovalbumin-related protein X">
    <location>
        <begin position="1" status="less than"/>
        <end position="232"/>
    </location>
</feature>
<feature type="non-terminal residue">
    <location>
        <position position="1"/>
    </location>
</feature>
<name>OVALX_CHICK</name>
<gene>
    <name type="primary">SERPINB14C</name>
    <name type="synonym">X</name>
</gene>
<accession>P01013</accession>
<dbReference type="EMBL" id="V00385">
    <property type="protein sequence ID" value="CAA23683.1"/>
    <property type="molecule type" value="Genomic_DNA"/>
</dbReference>
<dbReference type="EMBL" id="V00386">
    <property type="protein sequence ID" value="CAA23684.1"/>
    <property type="molecule type" value="Genomic_DNA"/>
</dbReference>
<dbReference type="EMBL" id="V00387">
    <property type="protein sequence ID" value="CAA23685.1"/>
    <property type="molecule type" value="Genomic_DNA"/>
</dbReference>
<dbReference type="PIR" id="A01243">
    <property type="entry name" value="DXCH"/>
</dbReference>
<dbReference type="SMR" id="P01013"/>
<dbReference type="FunCoup" id="P01013">
    <property type="interactions" value="66"/>
</dbReference>
<dbReference type="STRING" id="9031.ENSGALP00000052490"/>
<dbReference type="MEROPS" id="I04.958"/>
<dbReference type="VEuPathDB" id="HostDB:geneid_420898"/>
<dbReference type="InParanoid" id="P01013"/>
<dbReference type="PhylomeDB" id="P01013"/>
<dbReference type="Proteomes" id="UP000000539">
    <property type="component" value="Unassembled WGS sequence"/>
</dbReference>
<dbReference type="GO" id="GO:0005615">
    <property type="term" value="C:extracellular space"/>
    <property type="evidence" value="ECO:0000318"/>
    <property type="project" value="GO_Central"/>
</dbReference>
<dbReference type="GO" id="GO:0008201">
    <property type="term" value="F:heparin binding"/>
    <property type="evidence" value="ECO:0000314"/>
    <property type="project" value="AgBase"/>
</dbReference>
<dbReference type="GO" id="GO:0004867">
    <property type="term" value="F:serine-type endopeptidase inhibitor activity"/>
    <property type="evidence" value="ECO:0000318"/>
    <property type="project" value="GO_Central"/>
</dbReference>
<dbReference type="GO" id="GO:0050829">
    <property type="term" value="P:defense response to Gram-negative bacterium"/>
    <property type="evidence" value="ECO:0000314"/>
    <property type="project" value="AgBase"/>
</dbReference>
<dbReference type="GO" id="GO:0050830">
    <property type="term" value="P:defense response to Gram-positive bacterium"/>
    <property type="evidence" value="ECO:0000314"/>
    <property type="project" value="AgBase"/>
</dbReference>
<dbReference type="GO" id="GO:0051412">
    <property type="term" value="P:response to corticosterone"/>
    <property type="evidence" value="ECO:0000314"/>
    <property type="project" value="AgBase"/>
</dbReference>
<dbReference type="FunFam" id="2.30.39.10:FF:000001">
    <property type="entry name" value="Serpin family B member 2"/>
    <property type="match status" value="1"/>
</dbReference>
<dbReference type="Gene3D" id="2.30.39.10">
    <property type="entry name" value="Alpha-1-antitrypsin, domain 1"/>
    <property type="match status" value="1"/>
</dbReference>
<dbReference type="Gene3D" id="3.30.497.10">
    <property type="entry name" value="Antithrombin, subunit I, domain 2"/>
    <property type="match status" value="1"/>
</dbReference>
<dbReference type="InterPro" id="IPR023795">
    <property type="entry name" value="Serpin_CS"/>
</dbReference>
<dbReference type="InterPro" id="IPR023796">
    <property type="entry name" value="Serpin_dom"/>
</dbReference>
<dbReference type="InterPro" id="IPR000215">
    <property type="entry name" value="Serpin_fam"/>
</dbReference>
<dbReference type="InterPro" id="IPR036186">
    <property type="entry name" value="Serpin_sf"/>
</dbReference>
<dbReference type="InterPro" id="IPR042178">
    <property type="entry name" value="Serpin_sf_1"/>
</dbReference>
<dbReference type="InterPro" id="IPR042185">
    <property type="entry name" value="Serpin_sf_2"/>
</dbReference>
<dbReference type="PANTHER" id="PTHR11461">
    <property type="entry name" value="SERINE PROTEASE INHIBITOR, SERPIN"/>
    <property type="match status" value="1"/>
</dbReference>
<dbReference type="PANTHER" id="PTHR11461:SF186">
    <property type="entry name" value="SERPIN B4"/>
    <property type="match status" value="1"/>
</dbReference>
<dbReference type="Pfam" id="PF00079">
    <property type="entry name" value="Serpin"/>
    <property type="match status" value="1"/>
</dbReference>
<dbReference type="SMART" id="SM00093">
    <property type="entry name" value="SERPIN"/>
    <property type="match status" value="1"/>
</dbReference>
<dbReference type="SUPFAM" id="SSF56574">
    <property type="entry name" value="Serpins"/>
    <property type="match status" value="1"/>
</dbReference>
<dbReference type="PROSITE" id="PS00284">
    <property type="entry name" value="SERPIN"/>
    <property type="match status" value="1"/>
</dbReference>
<sequence length="232" mass="26291">QIKDLLVSSSTDLDTTLVLVNAIYFKGMWKTAFNAEDTREMPFHVTKQESKPVQMMCMNNSFNVATLPAEKMKILELPFASGDLSMLVLLPDEVSDLERIEKTINFEKLTEWTNPNTMEKRRVKVYLPQMKIEEKYNLTSVLMALGMTDLFIPSANLTGISSAESLKISQAVHGAFMELSEDGIEMAGSTGVIEDIKHSPESEQFRADHPFLFLIKHNPTNTIVYFGRYWSP</sequence>
<proteinExistence type="evidence at protein level"/>
<reference key="1">
    <citation type="journal article" date="1980" name="Cell">
        <title>The ovalbumin gene family: structure of the X gene and evolution of duplicated split genes.</title>
        <authorList>
            <person name="Heilig R."/>
            <person name="Perrin F."/>
            <person name="Gannon F."/>
            <person name="Mandel J.-L."/>
            <person name="Chambon P."/>
        </authorList>
    </citation>
    <scope>NUCLEOTIDE SEQUENCE [GENOMIC DNA]</scope>
</reference>
<reference key="2">
    <citation type="journal article" date="2014" name="J. Agric. Food Chem.">
        <title>Differential abundance of egg white proteins in laying hens treated with corticosterone.</title>
        <authorList>
            <person name="Kim J."/>
            <person name="Choi Y.H."/>
        </authorList>
    </citation>
    <scope>PROTEIN SEQUENCE OF 30-48; 73-100; 124-132; 197-207 AND 216-229</scope>
    <scope>TISSUE SPECIFICITY</scope>
    <scope>INDUCTION</scope>
    <scope>IDENTIFICATION BY MASS SPECTROMETRY</scope>
    <source>
        <tissue evidence="2">Egg white</tissue>
    </source>
</reference>
<evidence type="ECO:0000269" key="1">
    <source>
    </source>
</evidence>
<evidence type="ECO:0000303" key="2">
    <source>
    </source>
</evidence>
<evidence type="ECO:0000305" key="3"/>
<comment type="tissue specificity">
    <text evidence="1">Expressed in egg white (at protein level).</text>
</comment>
<comment type="induction">
    <text evidence="1">Up-regulated by dietary stress. Significantly increased expression between days 0 to 5 in egg whites of eggs laid by corticosterone-fed hens (at protein level).</text>
</comment>
<comment type="similarity">
    <text evidence="3">Belongs to the serpin family. Ov-serpin subfamily.</text>
</comment>
<organism>
    <name type="scientific">Gallus gallus</name>
    <name type="common">Chicken</name>
    <dbReference type="NCBI Taxonomy" id="9031"/>
    <lineage>
        <taxon>Eukaryota</taxon>
        <taxon>Metazoa</taxon>
        <taxon>Chordata</taxon>
        <taxon>Craniata</taxon>
        <taxon>Vertebrata</taxon>
        <taxon>Euteleostomi</taxon>
        <taxon>Archelosauria</taxon>
        <taxon>Archosauria</taxon>
        <taxon>Dinosauria</taxon>
        <taxon>Saurischia</taxon>
        <taxon>Theropoda</taxon>
        <taxon>Coelurosauria</taxon>
        <taxon>Aves</taxon>
        <taxon>Neognathae</taxon>
        <taxon>Galloanserae</taxon>
        <taxon>Galliformes</taxon>
        <taxon>Phasianidae</taxon>
        <taxon>Phasianinae</taxon>
        <taxon>Gallus</taxon>
    </lineage>
</organism>
<keyword id="KW-0903">Direct protein sequencing</keyword>
<keyword id="KW-1185">Reference proteome</keyword>
<protein>
    <recommendedName>
        <fullName>Ovalbumin-related protein X</fullName>
    </recommendedName>
    <alternativeName>
        <fullName>Gene X protein</fullName>
    </alternativeName>
</protein>